<gene>
    <name type="primary">RGS9BP</name>
    <name type="synonym">R9AP</name>
</gene>
<organism>
    <name type="scientific">Bos taurus</name>
    <name type="common">Bovine</name>
    <dbReference type="NCBI Taxonomy" id="9913"/>
    <lineage>
        <taxon>Eukaryota</taxon>
        <taxon>Metazoa</taxon>
        <taxon>Chordata</taxon>
        <taxon>Craniata</taxon>
        <taxon>Vertebrata</taxon>
        <taxon>Euteleostomi</taxon>
        <taxon>Mammalia</taxon>
        <taxon>Eutheria</taxon>
        <taxon>Laurasiatheria</taxon>
        <taxon>Artiodactyla</taxon>
        <taxon>Ruminantia</taxon>
        <taxon>Pecora</taxon>
        <taxon>Bovidae</taxon>
        <taxon>Bovinae</taxon>
        <taxon>Bos</taxon>
    </lineage>
</organism>
<proteinExistence type="evidence at protein level"/>
<keyword id="KW-0175">Coiled coil</keyword>
<keyword id="KW-0903">Direct protein sequencing</keyword>
<keyword id="KW-0472">Membrane</keyword>
<keyword id="KW-1185">Reference proteome</keyword>
<keyword id="KW-0716">Sensory transduction</keyword>
<keyword id="KW-0734">Signal transduction inhibitor</keyword>
<keyword id="KW-0812">Transmembrane</keyword>
<keyword id="KW-1133">Transmembrane helix</keyword>
<keyword id="KW-0844">Vision</keyword>
<evidence type="ECO:0000250" key="1"/>
<evidence type="ECO:0000255" key="2"/>
<evidence type="ECO:0000269" key="3">
    <source>
    </source>
</evidence>
<evidence type="ECO:0000269" key="4">
    <source>
    </source>
</evidence>
<evidence type="ECO:0000305" key="5"/>
<feature type="chain" id="PRO_0000287585" description="Regulator of G-protein signaling 9-binding protein">
    <location>
        <begin position="1"/>
        <end position="237"/>
    </location>
</feature>
<feature type="topological domain" description="Cytoplasmic" evidence="2">
    <location>
        <begin position="1"/>
        <end position="214"/>
    </location>
</feature>
<feature type="transmembrane region" description="Helical; Anchor for type IV membrane protein" evidence="2">
    <location>
        <begin position="215"/>
        <end position="234"/>
    </location>
</feature>
<feature type="topological domain" description="Extracellular" evidence="2">
    <location>
        <begin position="235"/>
        <end position="237"/>
    </location>
</feature>
<feature type="region of interest" description="SNARE-like" evidence="1">
    <location>
        <begin position="153"/>
        <end position="202"/>
    </location>
</feature>
<feature type="coiled-coil region" evidence="2">
    <location>
        <begin position="29"/>
        <end position="58"/>
    </location>
</feature>
<feature type="coiled-coil region" evidence="2">
    <location>
        <begin position="144"/>
        <end position="169"/>
    </location>
</feature>
<name>R9BP_BOVIN</name>
<accession>Q8MJG0</accession>
<dbReference type="EMBL" id="AF480475">
    <property type="protein sequence ID" value="AAM67417.1"/>
    <property type="molecule type" value="mRNA"/>
</dbReference>
<dbReference type="RefSeq" id="NP_001159988.1">
    <property type="nucleotide sequence ID" value="NM_001166516.1"/>
</dbReference>
<dbReference type="RefSeq" id="XP_005218961.1">
    <property type="nucleotide sequence ID" value="XM_005218904.3"/>
</dbReference>
<dbReference type="RefSeq" id="XP_059732498.1">
    <property type="nucleotide sequence ID" value="XM_059876515.1"/>
</dbReference>
<dbReference type="SMR" id="Q8MJG0"/>
<dbReference type="CORUM" id="Q8MJG0"/>
<dbReference type="FunCoup" id="Q8MJG0">
    <property type="interactions" value="48"/>
</dbReference>
<dbReference type="STRING" id="9913.ENSBTAP00000048052"/>
<dbReference type="PaxDb" id="9913-ENSBTAP00000048052"/>
<dbReference type="Ensembl" id="ENSBTAT00000051951.2">
    <property type="protein sequence ID" value="ENSBTAP00000048052.1"/>
    <property type="gene ID" value="ENSBTAG00000039441.2"/>
</dbReference>
<dbReference type="GeneID" id="282338"/>
<dbReference type="KEGG" id="bta:282338"/>
<dbReference type="CTD" id="388531"/>
<dbReference type="VEuPathDB" id="HostDB:ENSBTAG00000039441"/>
<dbReference type="VGNC" id="VGNC:33927">
    <property type="gene designation" value="RGS9BP"/>
</dbReference>
<dbReference type="eggNOG" id="ENOG502QT8D">
    <property type="taxonomic scope" value="Eukaryota"/>
</dbReference>
<dbReference type="GeneTree" id="ENSGT00940000153725"/>
<dbReference type="HOGENOM" id="CLU_093021_0_0_1"/>
<dbReference type="InParanoid" id="Q8MJG0"/>
<dbReference type="OMA" id="MVNDMEM"/>
<dbReference type="OrthoDB" id="6358515at2759"/>
<dbReference type="TreeFam" id="TF331562"/>
<dbReference type="Reactome" id="R-BTA-2514859">
    <property type="pathway name" value="Inactivation, recovery and regulation of the phototransduction cascade"/>
</dbReference>
<dbReference type="Proteomes" id="UP000009136">
    <property type="component" value="Chromosome 18"/>
</dbReference>
<dbReference type="Bgee" id="ENSBTAG00000039441">
    <property type="expression patterns" value="Expressed in retina and 18 other cell types or tissues"/>
</dbReference>
<dbReference type="GO" id="GO:0043005">
    <property type="term" value="C:neuron projection"/>
    <property type="evidence" value="ECO:0000318"/>
    <property type="project" value="GO_Central"/>
</dbReference>
<dbReference type="GO" id="GO:0097381">
    <property type="term" value="C:photoreceptor disc membrane"/>
    <property type="evidence" value="ECO:0000304"/>
    <property type="project" value="Reactome"/>
</dbReference>
<dbReference type="GO" id="GO:0120200">
    <property type="term" value="C:rod photoreceptor outer segment"/>
    <property type="evidence" value="ECO:0007669"/>
    <property type="project" value="Ensembl"/>
</dbReference>
<dbReference type="GO" id="GO:0050908">
    <property type="term" value="P:detection of light stimulus involved in visual perception"/>
    <property type="evidence" value="ECO:0000318"/>
    <property type="project" value="GO_Central"/>
</dbReference>
<dbReference type="GO" id="GO:0007186">
    <property type="term" value="P:G protein-coupled receptor signaling pathway"/>
    <property type="evidence" value="ECO:0000318"/>
    <property type="project" value="GO_Central"/>
</dbReference>
<dbReference type="GO" id="GO:0009968">
    <property type="term" value="P:negative regulation of signal transduction"/>
    <property type="evidence" value="ECO:0007669"/>
    <property type="project" value="UniProtKB-KW"/>
</dbReference>
<dbReference type="InterPro" id="IPR026512">
    <property type="entry name" value="RGS7BP/RGS9BP"/>
</dbReference>
<dbReference type="PANTHER" id="PTHR21029">
    <property type="entry name" value="R-SEVEN BINDING PROTEIN (R7BP) HOMOLOG"/>
    <property type="match status" value="1"/>
</dbReference>
<reference key="1">
    <citation type="journal article" date="2009" name="Science">
        <title>The genome sequence of taurine cattle: a window to ruminant biology and evolution.</title>
        <authorList>
            <consortium name="The bovine genome sequencing and analysis consortium"/>
        </authorList>
    </citation>
    <scope>NUCLEOTIDE SEQUENCE [LARGE SCALE GENOMIC DNA]</scope>
    <source>
        <strain>Hereford</strain>
    </source>
</reference>
<reference key="2">
    <citation type="journal article" date="2002" name="Proc. Natl. Acad. Sci. U.S.A.">
        <title>R9AP, a membrane anchor for the photoreceptor GTPase accelerating protein, RGS9-1.</title>
        <authorList>
            <person name="Hu G."/>
            <person name="Wensel T.G."/>
        </authorList>
    </citation>
    <scope>NUCLEOTIDE SEQUENCE [MRNA] OF 1-226</scope>
    <scope>PARTIAL PROTEIN SEQUENCE</scope>
    <scope>TISSUE SPECIFICITY</scope>
    <scope>INTERACTION WITH RGS9</scope>
    <source>
        <tissue>Retina</tissue>
    </source>
</reference>
<reference key="3">
    <citation type="journal article" date="2003" name="J. Biol. Chem.">
        <title>Activation of RGS9-1GTPase acceleration by its membrane anchor, R9AP.</title>
        <authorList>
            <person name="Hu G."/>
            <person name="Zhang Z."/>
            <person name="Wensel T.G."/>
        </authorList>
    </citation>
    <scope>FUNCTION</scope>
</reference>
<comment type="function">
    <text evidence="1 4">Regulator of G protein-coupled receptor (GPCR) signaling in phototransduction. Participates in the recovery phase of visual transduction via its interaction with RGS9-1 isoform. Acts as a membrane-anchor that mediates the targeting of RGS9-1 to the photoreceptor outer segment, where phototransduction takes place. Enhances the ability of RGS9-1 to stimulate G protein GTPase activity, allowing the visual signal to be terminated on the physiologically time scale. It also controls the proteolytic stability of RGS9-1, probably by protecting it from degradation (By similarity).</text>
</comment>
<comment type="subunit">
    <text evidence="3">Specifically interacts with isoform RGS9-1 of RGS9. Component of the RGS9-1-Gbeta5 complex composed of RGS9-1, Gbeta5 (GNB5) and RGS9BP.</text>
</comment>
<comment type="subcellular location">
    <subcellularLocation>
        <location evidence="1">Membrane</location>
        <topology evidence="1">Single-pass type IV membrane protein</topology>
    </subcellularLocation>
</comment>
<comment type="tissue specificity">
    <text evidence="3">Specifically expressed in the retina. Only present in photoreceptors (at protein level).</text>
</comment>
<comment type="similarity">
    <text evidence="5">Belongs to the RGS7BP/RGS9BP family.</text>
</comment>
<protein>
    <recommendedName>
        <fullName>Regulator of G-protein signaling 9-binding protein</fullName>
    </recommendedName>
    <alternativeName>
        <fullName>RGS9-anchoring protein</fullName>
    </alternativeName>
</protein>
<sequence length="237" mass="25709">MAKEECKALLDALNKATACYHHLVLTIGGSADSQNLREELQKTRQKAQELAVAIRLRLTAPLRDRSLGAEERAEFERLWVAFSGCLDLLEADMRRALALSTEFPLQEPRRPLVRTGVEGGATGVAARALSVRSLRHEAHRDFDVEDLHQLEREILQVGEMIQDMEMKVNVPRWTVQARQAAGAELLSSASAGVSSVGGVSVEQRTGPCDLSKAKAATIFSAVLLAAVALAVCVAKLS</sequence>